<keyword id="KW-0001">2Fe-2S</keyword>
<keyword id="KW-0010">Activator</keyword>
<keyword id="KW-0238">DNA-binding</keyword>
<keyword id="KW-0408">Iron</keyword>
<keyword id="KW-0411">Iron-sulfur</keyword>
<keyword id="KW-0479">Metal-binding</keyword>
<keyword id="KW-1185">Reference proteome</keyword>
<keyword id="KW-0678">Repressor</keyword>
<keyword id="KW-0804">Transcription</keyword>
<keyword id="KW-0805">Transcription regulation</keyword>
<comment type="function">
    <text evidence="1">Regulates the transcription of several operons and genes involved in the biogenesis of Fe-S clusters and Fe-S-containing proteins.</text>
</comment>
<comment type="cofactor">
    <cofactor evidence="1">
        <name>[2Fe-2S] cluster</name>
        <dbReference type="ChEBI" id="CHEBI:190135"/>
    </cofactor>
    <text evidence="1">Binds 1 [2Fe-2S] cluster.</text>
</comment>
<organism>
    <name type="scientific">Photobacterium profundum (strain SS9)</name>
    <dbReference type="NCBI Taxonomy" id="298386"/>
    <lineage>
        <taxon>Bacteria</taxon>
        <taxon>Pseudomonadati</taxon>
        <taxon>Pseudomonadota</taxon>
        <taxon>Gammaproteobacteria</taxon>
        <taxon>Vibrionales</taxon>
        <taxon>Vibrionaceae</taxon>
        <taxon>Photobacterium</taxon>
    </lineage>
</organism>
<sequence>MRLTSKGRYAVTAMLDVALHSQDGPVPLADISERQGISLSYLEQLFSRLRKAGLVASVRGPGGGYRLGEDANDIAVGMVIAAVDESVDATKCHGKADCQGGVRCLTHTLWHDLSSRISGFLNNITLGELMRDNNVQEISGRQDQVLSNSSLRTSFGHKKTHDSTTIGVDVRS</sequence>
<name>ISCR_PHOPR</name>
<reference key="1">
    <citation type="journal article" date="2005" name="Science">
        <title>Life at depth: Photobacterium profundum genome sequence and expression analysis.</title>
        <authorList>
            <person name="Vezzi A."/>
            <person name="Campanaro S."/>
            <person name="D'Angelo M."/>
            <person name="Simonato F."/>
            <person name="Vitulo N."/>
            <person name="Lauro F.M."/>
            <person name="Cestaro A."/>
            <person name="Malacrida G."/>
            <person name="Simionati B."/>
            <person name="Cannata N."/>
            <person name="Romualdi C."/>
            <person name="Bartlett D.H."/>
            <person name="Valle G."/>
        </authorList>
    </citation>
    <scope>NUCLEOTIDE SEQUENCE [LARGE SCALE GENOMIC DNA]</scope>
    <source>
        <strain>ATCC BAA-1253 / SS9</strain>
    </source>
</reference>
<gene>
    <name evidence="1" type="primary">iscR</name>
    <name type="ordered locus">PBPRA0749</name>
</gene>
<evidence type="ECO:0000255" key="1">
    <source>
        <dbReference type="HAMAP-Rule" id="MF_01176"/>
    </source>
</evidence>
<feature type="chain" id="PRO_0000268920" description="HTH-type transcriptional regulator IscR">
    <location>
        <begin position="1"/>
        <end position="172"/>
    </location>
</feature>
<feature type="domain" description="HTH rrf2-type" evidence="1">
    <location>
        <begin position="2"/>
        <end position="131"/>
    </location>
</feature>
<feature type="DNA-binding region" description="H-T-H motif" evidence="1">
    <location>
        <begin position="28"/>
        <end position="51"/>
    </location>
</feature>
<feature type="binding site" evidence="1">
    <location>
        <position position="92"/>
    </location>
    <ligand>
        <name>[2Fe-2S] cluster</name>
        <dbReference type="ChEBI" id="CHEBI:190135"/>
    </ligand>
</feature>
<feature type="binding site" evidence="1">
    <location>
        <position position="98"/>
    </location>
    <ligand>
        <name>[2Fe-2S] cluster</name>
        <dbReference type="ChEBI" id="CHEBI:190135"/>
    </ligand>
</feature>
<feature type="binding site" evidence="1">
    <location>
        <position position="104"/>
    </location>
    <ligand>
        <name>[2Fe-2S] cluster</name>
        <dbReference type="ChEBI" id="CHEBI:190135"/>
    </ligand>
</feature>
<protein>
    <recommendedName>
        <fullName evidence="1">HTH-type transcriptional regulator IscR</fullName>
    </recommendedName>
</protein>
<dbReference type="EMBL" id="CR378665">
    <property type="protein sequence ID" value="CAG19162.1"/>
    <property type="molecule type" value="Genomic_DNA"/>
</dbReference>
<dbReference type="RefSeq" id="WP_011217505.1">
    <property type="nucleotide sequence ID" value="NC_006370.1"/>
</dbReference>
<dbReference type="SMR" id="Q6LU63"/>
<dbReference type="STRING" id="298386.PBPRA0749"/>
<dbReference type="KEGG" id="ppr:PBPRA0749"/>
<dbReference type="eggNOG" id="COG1959">
    <property type="taxonomic scope" value="Bacteria"/>
</dbReference>
<dbReference type="HOGENOM" id="CLU_107144_0_0_6"/>
<dbReference type="Proteomes" id="UP000000593">
    <property type="component" value="Chromosome 1"/>
</dbReference>
<dbReference type="GO" id="GO:0005829">
    <property type="term" value="C:cytosol"/>
    <property type="evidence" value="ECO:0007669"/>
    <property type="project" value="TreeGrafter"/>
</dbReference>
<dbReference type="GO" id="GO:0051537">
    <property type="term" value="F:2 iron, 2 sulfur cluster binding"/>
    <property type="evidence" value="ECO:0007669"/>
    <property type="project" value="UniProtKB-KW"/>
</dbReference>
<dbReference type="GO" id="GO:0003700">
    <property type="term" value="F:DNA-binding transcription factor activity"/>
    <property type="evidence" value="ECO:0007669"/>
    <property type="project" value="UniProtKB-UniRule"/>
</dbReference>
<dbReference type="GO" id="GO:0003690">
    <property type="term" value="F:double-stranded DNA binding"/>
    <property type="evidence" value="ECO:0007669"/>
    <property type="project" value="UniProtKB-UniRule"/>
</dbReference>
<dbReference type="GO" id="GO:0005506">
    <property type="term" value="F:iron ion binding"/>
    <property type="evidence" value="ECO:0007669"/>
    <property type="project" value="UniProtKB-UniRule"/>
</dbReference>
<dbReference type="FunFam" id="1.10.10.10:FF:000026">
    <property type="entry name" value="HTH-type transcriptional regulator IscR"/>
    <property type="match status" value="1"/>
</dbReference>
<dbReference type="Gene3D" id="1.10.10.10">
    <property type="entry name" value="Winged helix-like DNA-binding domain superfamily/Winged helix DNA-binding domain"/>
    <property type="match status" value="1"/>
</dbReference>
<dbReference type="HAMAP" id="MF_01176">
    <property type="entry name" value="HTH_type_IscR"/>
    <property type="match status" value="1"/>
</dbReference>
<dbReference type="InterPro" id="IPR010242">
    <property type="entry name" value="TF_HTH_IscR"/>
</dbReference>
<dbReference type="InterPro" id="IPR030489">
    <property type="entry name" value="TR_Rrf2-type_CS"/>
</dbReference>
<dbReference type="InterPro" id="IPR000944">
    <property type="entry name" value="Tscrpt_reg_Rrf2"/>
</dbReference>
<dbReference type="InterPro" id="IPR036388">
    <property type="entry name" value="WH-like_DNA-bd_sf"/>
</dbReference>
<dbReference type="InterPro" id="IPR036390">
    <property type="entry name" value="WH_DNA-bd_sf"/>
</dbReference>
<dbReference type="NCBIfam" id="TIGR02010">
    <property type="entry name" value="IscR"/>
    <property type="match status" value="1"/>
</dbReference>
<dbReference type="NCBIfam" id="NF008110">
    <property type="entry name" value="PRK10857.1"/>
    <property type="match status" value="1"/>
</dbReference>
<dbReference type="NCBIfam" id="TIGR00738">
    <property type="entry name" value="rrf2_super"/>
    <property type="match status" value="1"/>
</dbReference>
<dbReference type="PANTHER" id="PTHR33221:SF5">
    <property type="entry name" value="HTH-TYPE TRANSCRIPTIONAL REGULATOR ISCR"/>
    <property type="match status" value="1"/>
</dbReference>
<dbReference type="PANTHER" id="PTHR33221">
    <property type="entry name" value="WINGED HELIX-TURN-HELIX TRANSCRIPTIONAL REGULATOR, RRF2 FAMILY"/>
    <property type="match status" value="1"/>
</dbReference>
<dbReference type="Pfam" id="PF02082">
    <property type="entry name" value="Rrf2"/>
    <property type="match status" value="1"/>
</dbReference>
<dbReference type="SUPFAM" id="SSF46785">
    <property type="entry name" value="Winged helix' DNA-binding domain"/>
    <property type="match status" value="1"/>
</dbReference>
<dbReference type="PROSITE" id="PS01332">
    <property type="entry name" value="HTH_RRF2_1"/>
    <property type="match status" value="1"/>
</dbReference>
<dbReference type="PROSITE" id="PS51197">
    <property type="entry name" value="HTH_RRF2_2"/>
    <property type="match status" value="1"/>
</dbReference>
<accession>Q6LU63</accession>
<proteinExistence type="inferred from homology"/>